<keyword id="KW-0997">Cell inner membrane</keyword>
<keyword id="KW-1003">Cell membrane</keyword>
<keyword id="KW-0472">Membrane</keyword>
<keyword id="KW-1185">Reference proteome</keyword>
<keyword id="KW-0812">Transmembrane</keyword>
<keyword id="KW-1133">Transmembrane helix</keyword>
<name>YFBV_ECO57</name>
<feature type="chain" id="PRO_0000080810" description="UPF0208 membrane protein YfbV">
    <location>
        <begin position="1"/>
        <end position="151"/>
    </location>
</feature>
<feature type="topological domain" description="Cytoplasmic" evidence="2">
    <location>
        <begin position="1"/>
        <end position="45"/>
    </location>
</feature>
<feature type="transmembrane region" description="Helical" evidence="1">
    <location>
        <begin position="46"/>
        <end position="65"/>
    </location>
</feature>
<feature type="topological domain" description="Periplasmic" evidence="2">
    <location>
        <begin position="66"/>
        <end position="68"/>
    </location>
</feature>
<feature type="transmembrane region" description="Helical" evidence="1">
    <location>
        <begin position="69"/>
        <end position="91"/>
    </location>
</feature>
<feature type="topological domain" description="Cytoplasmic" evidence="2">
    <location>
        <begin position="92"/>
        <end position="151"/>
    </location>
</feature>
<reference key="1">
    <citation type="journal article" date="2001" name="Nature">
        <title>Genome sequence of enterohaemorrhagic Escherichia coli O157:H7.</title>
        <authorList>
            <person name="Perna N.T."/>
            <person name="Plunkett G. III"/>
            <person name="Burland V."/>
            <person name="Mau B."/>
            <person name="Glasner J.D."/>
            <person name="Rose D.J."/>
            <person name="Mayhew G.F."/>
            <person name="Evans P.S."/>
            <person name="Gregor J."/>
            <person name="Kirkpatrick H.A."/>
            <person name="Posfai G."/>
            <person name="Hackett J."/>
            <person name="Klink S."/>
            <person name="Boutin A."/>
            <person name="Shao Y."/>
            <person name="Miller L."/>
            <person name="Grotbeck E.J."/>
            <person name="Davis N.W."/>
            <person name="Lim A."/>
            <person name="Dimalanta E.T."/>
            <person name="Potamousis K."/>
            <person name="Apodaca J."/>
            <person name="Anantharaman T.S."/>
            <person name="Lin J."/>
            <person name="Yen G."/>
            <person name="Schwartz D.C."/>
            <person name="Welch R.A."/>
            <person name="Blattner F.R."/>
        </authorList>
    </citation>
    <scope>NUCLEOTIDE SEQUENCE [LARGE SCALE GENOMIC DNA]</scope>
    <source>
        <strain>O157:H7 / EDL933 / ATCC 700927 / EHEC</strain>
    </source>
</reference>
<reference key="2">
    <citation type="journal article" date="2001" name="DNA Res.">
        <title>Complete genome sequence of enterohemorrhagic Escherichia coli O157:H7 and genomic comparison with a laboratory strain K-12.</title>
        <authorList>
            <person name="Hayashi T."/>
            <person name="Makino K."/>
            <person name="Ohnishi M."/>
            <person name="Kurokawa K."/>
            <person name="Ishii K."/>
            <person name="Yokoyama K."/>
            <person name="Han C.-G."/>
            <person name="Ohtsubo E."/>
            <person name="Nakayama K."/>
            <person name="Murata T."/>
            <person name="Tanaka M."/>
            <person name="Tobe T."/>
            <person name="Iida T."/>
            <person name="Takami H."/>
            <person name="Honda T."/>
            <person name="Sasakawa C."/>
            <person name="Ogasawara N."/>
            <person name="Yasunaga T."/>
            <person name="Kuhara S."/>
            <person name="Shiba T."/>
            <person name="Hattori M."/>
            <person name="Shinagawa H."/>
        </authorList>
    </citation>
    <scope>NUCLEOTIDE SEQUENCE [LARGE SCALE GENOMIC DNA]</scope>
    <source>
        <strain>O157:H7 / Sakai / RIMD 0509952 / EHEC</strain>
    </source>
</reference>
<comment type="subcellular location">
    <subcellularLocation>
        <location evidence="1">Cell inner membrane</location>
        <topology evidence="1">Multi-pass membrane protein</topology>
    </subcellularLocation>
</comment>
<comment type="similarity">
    <text evidence="1">Belongs to the UPF0208 family.</text>
</comment>
<proteinExistence type="inferred from homology"/>
<accession>P0A8E0</accession>
<accession>P77496</accession>
<accession>Q8X2P6</accession>
<accession>Q8X4G9</accession>
<protein>
    <recommendedName>
        <fullName evidence="1">UPF0208 membrane protein YfbV</fullName>
    </recommendedName>
</protein>
<evidence type="ECO:0000255" key="1">
    <source>
        <dbReference type="HAMAP-Rule" id="MF_01101"/>
    </source>
</evidence>
<evidence type="ECO:0000305" key="2"/>
<gene>
    <name evidence="1" type="primary">yfbV</name>
    <name type="ordered locus">Z3556</name>
    <name type="ordered locus">ECs3179</name>
</gene>
<sequence>MSTPDNRSVNFFSLFRRGQHYSKTWPLEKRLAPVFVENRVIKMTRYAIRFMPPIAVFTLCWQIALGGQLGPAVATALFALSLPMQGLWWLGKRSVTPLPPAILNWFYEVRGKLQESGQVLAPVEGKPDYQALADTLKRAFKQLDKTFLDDL</sequence>
<organism>
    <name type="scientific">Escherichia coli O157:H7</name>
    <dbReference type="NCBI Taxonomy" id="83334"/>
    <lineage>
        <taxon>Bacteria</taxon>
        <taxon>Pseudomonadati</taxon>
        <taxon>Pseudomonadota</taxon>
        <taxon>Gammaproteobacteria</taxon>
        <taxon>Enterobacterales</taxon>
        <taxon>Enterobacteriaceae</taxon>
        <taxon>Escherichia</taxon>
    </lineage>
</organism>
<dbReference type="EMBL" id="AE005174">
    <property type="protein sequence ID" value="AAG57424.1"/>
    <property type="molecule type" value="Genomic_DNA"/>
</dbReference>
<dbReference type="EMBL" id="BA000007">
    <property type="protein sequence ID" value="BAB36602.2"/>
    <property type="molecule type" value="Genomic_DNA"/>
</dbReference>
<dbReference type="RefSeq" id="NP_311206.1">
    <property type="nucleotide sequence ID" value="NC_002695.1"/>
</dbReference>
<dbReference type="RefSeq" id="WP_000106627.1">
    <property type="nucleotide sequence ID" value="NZ_VOAI01000001.1"/>
</dbReference>
<dbReference type="STRING" id="155864.Z3556"/>
<dbReference type="GeneID" id="916887"/>
<dbReference type="GeneID" id="93774879"/>
<dbReference type="KEGG" id="ece:Z3556"/>
<dbReference type="KEGG" id="ecs:ECs_3179"/>
<dbReference type="PATRIC" id="fig|386585.9.peg.3318"/>
<dbReference type="eggNOG" id="COG3092">
    <property type="taxonomic scope" value="Bacteria"/>
</dbReference>
<dbReference type="HOGENOM" id="CLU_128746_0_0_6"/>
<dbReference type="OMA" id="IMPPVAV"/>
<dbReference type="Proteomes" id="UP000000558">
    <property type="component" value="Chromosome"/>
</dbReference>
<dbReference type="Proteomes" id="UP000002519">
    <property type="component" value="Chromosome"/>
</dbReference>
<dbReference type="GO" id="GO:0005886">
    <property type="term" value="C:plasma membrane"/>
    <property type="evidence" value="ECO:0007669"/>
    <property type="project" value="UniProtKB-SubCell"/>
</dbReference>
<dbReference type="HAMAP" id="MF_01101">
    <property type="entry name" value="UPF0208"/>
    <property type="match status" value="1"/>
</dbReference>
<dbReference type="InterPro" id="IPR007334">
    <property type="entry name" value="UPF0208"/>
</dbReference>
<dbReference type="NCBIfam" id="NF002493">
    <property type="entry name" value="PRK01816.1"/>
    <property type="match status" value="1"/>
</dbReference>
<dbReference type="Pfam" id="PF04217">
    <property type="entry name" value="DUF412"/>
    <property type="match status" value="1"/>
</dbReference>